<gene>
    <name evidence="2" type="primary">holC</name>
    <name type="ordered locus">PA3832</name>
</gene>
<dbReference type="EC" id="2.7.7.7"/>
<dbReference type="EMBL" id="AF054622">
    <property type="protein sequence ID" value="AAD04822.1"/>
    <property type="molecule type" value="Genomic_DNA"/>
</dbReference>
<dbReference type="EMBL" id="AE004091">
    <property type="protein sequence ID" value="AAG07219.1"/>
    <property type="molecule type" value="Genomic_DNA"/>
</dbReference>
<dbReference type="PIR" id="E83167">
    <property type="entry name" value="E83167"/>
</dbReference>
<dbReference type="RefSeq" id="NP_252521.1">
    <property type="nucleotide sequence ID" value="NC_002516.2"/>
</dbReference>
<dbReference type="RefSeq" id="WP_003100593.1">
    <property type="nucleotide sequence ID" value="NZ_QZGE01000001.1"/>
</dbReference>
<dbReference type="SMR" id="O68823"/>
<dbReference type="FunCoup" id="O68823">
    <property type="interactions" value="129"/>
</dbReference>
<dbReference type="STRING" id="208964.PA3832"/>
<dbReference type="PaxDb" id="208964-PA3832"/>
<dbReference type="DNASU" id="879882"/>
<dbReference type="GeneID" id="879882"/>
<dbReference type="KEGG" id="pae:PA3832"/>
<dbReference type="PATRIC" id="fig|208964.12.peg.4012"/>
<dbReference type="PseudoCAP" id="PA3832"/>
<dbReference type="HOGENOM" id="CLU_131584_2_1_6"/>
<dbReference type="InParanoid" id="O68823"/>
<dbReference type="OrthoDB" id="5297568at2"/>
<dbReference type="PhylomeDB" id="O68823"/>
<dbReference type="BioCyc" id="PAER208964:G1FZ6-3904-MONOMER"/>
<dbReference type="Proteomes" id="UP000002438">
    <property type="component" value="Chromosome"/>
</dbReference>
<dbReference type="GO" id="GO:0003677">
    <property type="term" value="F:DNA binding"/>
    <property type="evidence" value="ECO:0007669"/>
    <property type="project" value="InterPro"/>
</dbReference>
<dbReference type="GO" id="GO:0003887">
    <property type="term" value="F:DNA-directed DNA polymerase activity"/>
    <property type="evidence" value="ECO:0007669"/>
    <property type="project" value="UniProtKB-KW"/>
</dbReference>
<dbReference type="GO" id="GO:0006260">
    <property type="term" value="P:DNA replication"/>
    <property type="evidence" value="ECO:0007669"/>
    <property type="project" value="UniProtKB-KW"/>
</dbReference>
<dbReference type="GO" id="GO:0032298">
    <property type="term" value="P:positive regulation of DNA-templated DNA replication initiation"/>
    <property type="evidence" value="ECO:0000318"/>
    <property type="project" value="GO_Central"/>
</dbReference>
<dbReference type="FunFam" id="3.40.50.10110:FF:000002">
    <property type="entry name" value="DNA polymerase III, chi subunit"/>
    <property type="match status" value="1"/>
</dbReference>
<dbReference type="Gene3D" id="3.40.50.10110">
    <property type="entry name" value="DNA polymerase III subunit chi"/>
    <property type="match status" value="1"/>
</dbReference>
<dbReference type="InterPro" id="IPR007459">
    <property type="entry name" value="DNA_pol3_chi"/>
</dbReference>
<dbReference type="InterPro" id="IPR036768">
    <property type="entry name" value="PolIII_chi_sf"/>
</dbReference>
<dbReference type="PANTHER" id="PTHR38767">
    <property type="entry name" value="DNA POLYMERASE III SUBUNIT CHI"/>
    <property type="match status" value="1"/>
</dbReference>
<dbReference type="PANTHER" id="PTHR38767:SF1">
    <property type="entry name" value="DNA POLYMERASE III SUBUNIT CHI"/>
    <property type="match status" value="1"/>
</dbReference>
<dbReference type="Pfam" id="PF04364">
    <property type="entry name" value="DNA_pol3_chi"/>
    <property type="match status" value="1"/>
</dbReference>
<dbReference type="SUPFAM" id="SSF102400">
    <property type="entry name" value="DNA polymerase III chi subunit"/>
    <property type="match status" value="1"/>
</dbReference>
<protein>
    <recommendedName>
        <fullName evidence="1">DNA polymerase III subunit chi</fullName>
        <ecNumber>2.7.7.7</ecNumber>
    </recommendedName>
    <alternativeName>
        <fullName evidence="3">Accessory clamp loader complex subunit chi</fullName>
    </alternativeName>
    <alternativeName>
        <fullName evidence="3">Replication clamp loader subunit HolC</fullName>
    </alternativeName>
</protein>
<feature type="chain" id="PRO_0000105519" description="DNA polymerase III subunit chi">
    <location>
        <begin position="1"/>
        <end position="142"/>
    </location>
</feature>
<sequence length="142" mass="16141">MTRVDFYVIPSADPSARLQVACRLAEKAWRQGMQVYLHCADEAQRSELDGRLWSFRGEAFIPHSLAEEDAEAPVALGLGEPPGNHRDLLINLTLEAPGFVPNFSRVAELVVEEPAIRQAARDKFRFYREQGYPLQDHRLPRI</sequence>
<reference key="1">
    <citation type="journal article" date="1999" name="J. Bacteriol.">
        <title>Identification of an Escherichia coli pepA homolog and its involvement in suppression of the algB phenotype in mucoid Pseudomonas aeruginosa.</title>
        <authorList>
            <person name="Woolwine S.C."/>
            <person name="Wozniak D.J."/>
        </authorList>
    </citation>
    <scope>NUCLEOTIDE SEQUENCE [GENOMIC DNA]</scope>
    <source>
        <strain>FRD1</strain>
    </source>
</reference>
<reference key="2">
    <citation type="journal article" date="2000" name="Nature">
        <title>Complete genome sequence of Pseudomonas aeruginosa PAO1, an opportunistic pathogen.</title>
        <authorList>
            <person name="Stover C.K."/>
            <person name="Pham X.-Q.T."/>
            <person name="Erwin A.L."/>
            <person name="Mizoguchi S.D."/>
            <person name="Warrener P."/>
            <person name="Hickey M.J."/>
            <person name="Brinkman F.S.L."/>
            <person name="Hufnagle W.O."/>
            <person name="Kowalik D.J."/>
            <person name="Lagrou M."/>
            <person name="Garber R.L."/>
            <person name="Goltry L."/>
            <person name="Tolentino E."/>
            <person name="Westbrock-Wadman S."/>
            <person name="Yuan Y."/>
            <person name="Brody L.L."/>
            <person name="Coulter S.N."/>
            <person name="Folger K.R."/>
            <person name="Kas A."/>
            <person name="Larbig K."/>
            <person name="Lim R.M."/>
            <person name="Smith K.A."/>
            <person name="Spencer D.H."/>
            <person name="Wong G.K.-S."/>
            <person name="Wu Z."/>
            <person name="Paulsen I.T."/>
            <person name="Reizer J."/>
            <person name="Saier M.H. Jr."/>
            <person name="Hancock R.E.W."/>
            <person name="Lory S."/>
            <person name="Olson M.V."/>
        </authorList>
    </citation>
    <scope>NUCLEOTIDE SEQUENCE [LARGE SCALE GENOMIC DNA]</scope>
    <source>
        <strain>ATCC 15692 / DSM 22644 / CIP 104116 / JCM 14847 / LMG 12228 / 1C / PRS 101 / PAO1</strain>
    </source>
</reference>
<organism>
    <name type="scientific">Pseudomonas aeruginosa (strain ATCC 15692 / DSM 22644 / CIP 104116 / JCM 14847 / LMG 12228 / 1C / PRS 101 / PAO1)</name>
    <dbReference type="NCBI Taxonomy" id="208964"/>
    <lineage>
        <taxon>Bacteria</taxon>
        <taxon>Pseudomonadati</taxon>
        <taxon>Pseudomonadota</taxon>
        <taxon>Gammaproteobacteria</taxon>
        <taxon>Pseudomonadales</taxon>
        <taxon>Pseudomonadaceae</taxon>
        <taxon>Pseudomonas</taxon>
    </lineage>
</organism>
<proteinExistence type="inferred from homology"/>
<comment type="function">
    <text evidence="1">Part of the beta sliding clamp loading complex, which hydrolyzes ATP to load the beta clamp onto primed DNA to form the DNA replication pre-initiation complex. DNA polymerase III is a complex, multichain enzyme responsible for most of the replicative synthesis in bacteria. This DNA polymerase also exhibits 3' to 5' exonuclease activity (By similarity).</text>
</comment>
<comment type="catalytic activity">
    <reaction>
        <text>DNA(n) + a 2'-deoxyribonucleoside 5'-triphosphate = DNA(n+1) + diphosphate</text>
        <dbReference type="Rhea" id="RHEA:22508"/>
        <dbReference type="Rhea" id="RHEA-COMP:17339"/>
        <dbReference type="Rhea" id="RHEA-COMP:17340"/>
        <dbReference type="ChEBI" id="CHEBI:33019"/>
        <dbReference type="ChEBI" id="CHEBI:61560"/>
        <dbReference type="ChEBI" id="CHEBI:173112"/>
        <dbReference type="EC" id="2.7.7.7"/>
    </reaction>
</comment>
<comment type="subunit">
    <text evidence="1">DNA polymerase III contains a core (composed of alpha, epsilon and theta chains) that associates with a tau subunit. This core dimerizes to form the POLIII' complex. PolIII' associates with the gamma complex (composed of gamma, delta, delta', psi and chi chains) and with the beta chain to form the complete DNA polymerase III complex. Interacts directly with the psi subunit (holD). The only subunit of the DNA polymerase III holoenzyme known to interact with single-stranded DNA binding protein (SSB) (By similarity).</text>
</comment>
<comment type="similarity">
    <text evidence="3">Belongs to the DNA polymerase III chi/HolC chain family.</text>
</comment>
<keyword id="KW-0235">DNA replication</keyword>
<keyword id="KW-0239">DNA-directed DNA polymerase</keyword>
<keyword id="KW-0548">Nucleotidyltransferase</keyword>
<keyword id="KW-1185">Reference proteome</keyword>
<keyword id="KW-0808">Transferase</keyword>
<evidence type="ECO:0000250" key="1">
    <source>
        <dbReference type="UniProtKB" id="P28905"/>
    </source>
</evidence>
<evidence type="ECO:0000303" key="2">
    <source>
    </source>
</evidence>
<evidence type="ECO:0000305" key="3"/>
<accession>O68823</accession>
<name>HOLC_PSEAE</name>